<keyword id="KW-0002">3D-structure</keyword>
<keyword id="KW-0903">Direct protein sequencing</keyword>
<keyword id="KW-0249">Electron transport</keyword>
<keyword id="KW-0285">Flavoprotein</keyword>
<keyword id="KW-0288">FMN</keyword>
<keyword id="KW-0813">Transport</keyword>
<organism>
    <name type="scientific">Nostoc sp. (strain ATCC 29151 / PCC 7119)</name>
    <name type="common">Anabaena sp.</name>
    <dbReference type="NCBI Taxonomy" id="1168"/>
    <lineage>
        <taxon>Bacteria</taxon>
        <taxon>Bacillati</taxon>
        <taxon>Cyanobacteriota</taxon>
        <taxon>Cyanophyceae</taxon>
        <taxon>Nostocales</taxon>
        <taxon>Nostocaceae</taxon>
        <taxon>Nostoc</taxon>
    </lineage>
</organism>
<accession>P0A3E0</accession>
<accession>P11241</accession>
<dbReference type="EMBL" id="S68006">
    <property type="protein sequence ID" value="AAB20462.1"/>
    <property type="molecule type" value="Genomic_DNA"/>
</dbReference>
<dbReference type="PDB" id="1DX9">
    <property type="method" value="X-ray"/>
    <property type="resolution" value="2.05 A"/>
    <property type="chains" value="A/B/C/D=2-170"/>
</dbReference>
<dbReference type="PDB" id="1FTG">
    <property type="method" value="X-ray"/>
    <property type="resolution" value="2.00 A"/>
    <property type="chains" value="A=3-170"/>
</dbReference>
<dbReference type="PDB" id="1OBO">
    <property type="method" value="X-ray"/>
    <property type="resolution" value="1.20 A"/>
    <property type="chains" value="A/B=3-170"/>
</dbReference>
<dbReference type="PDB" id="1OBV">
    <property type="method" value="X-ray"/>
    <property type="resolution" value="2.10 A"/>
    <property type="chains" value="A=3-170"/>
</dbReference>
<dbReference type="PDB" id="1QHE">
    <property type="method" value="X-ray"/>
    <property type="resolution" value="2.00 A"/>
    <property type="chains" value="A=3-170"/>
</dbReference>
<dbReference type="PDB" id="2KQU">
    <property type="method" value="NMR"/>
    <property type="chains" value="A=3-170"/>
</dbReference>
<dbReference type="PDB" id="2V5U">
    <property type="method" value="X-ray"/>
    <property type="resolution" value="1.99 A"/>
    <property type="chains" value="A/B=2-170"/>
</dbReference>
<dbReference type="PDB" id="2V5V">
    <property type="method" value="X-ray"/>
    <property type="resolution" value="1.88 A"/>
    <property type="chains" value="A/B=2-170"/>
</dbReference>
<dbReference type="PDB" id="3ESX">
    <property type="method" value="X-ray"/>
    <property type="resolution" value="2.31 A"/>
    <property type="chains" value="A/B=2-170"/>
</dbReference>
<dbReference type="PDB" id="3ESY">
    <property type="method" value="X-ray"/>
    <property type="resolution" value="2.39 A"/>
    <property type="chains" value="A/B/C/D=2-170"/>
</dbReference>
<dbReference type="PDB" id="3ESZ">
    <property type="method" value="X-ray"/>
    <property type="resolution" value="1.94 A"/>
    <property type="chains" value="A/B=2-170"/>
</dbReference>
<dbReference type="PDB" id="5LJP">
    <property type="method" value="X-ray"/>
    <property type="resolution" value="1.10 A"/>
    <property type="chains" value="A=2-170"/>
</dbReference>
<dbReference type="PDBsum" id="1DX9"/>
<dbReference type="PDBsum" id="1FTG"/>
<dbReference type="PDBsum" id="1OBO"/>
<dbReference type="PDBsum" id="1OBV"/>
<dbReference type="PDBsum" id="1QHE"/>
<dbReference type="PDBsum" id="2KQU"/>
<dbReference type="PDBsum" id="2V5U"/>
<dbReference type="PDBsum" id="2V5V"/>
<dbReference type="PDBsum" id="3ESX"/>
<dbReference type="PDBsum" id="3ESY"/>
<dbReference type="PDBsum" id="3ESZ"/>
<dbReference type="PDBsum" id="5LJP"/>
<dbReference type="BMRB" id="P0A3E0"/>
<dbReference type="SMR" id="P0A3E0"/>
<dbReference type="IntAct" id="P0A3E0">
    <property type="interactions" value="3"/>
</dbReference>
<dbReference type="EvolutionaryTrace" id="P0A3E0"/>
<dbReference type="GO" id="GO:0009055">
    <property type="term" value="F:electron transfer activity"/>
    <property type="evidence" value="ECO:0000314"/>
    <property type="project" value="UniProtKB"/>
</dbReference>
<dbReference type="GO" id="GO:0010181">
    <property type="term" value="F:FMN binding"/>
    <property type="evidence" value="ECO:0000304"/>
    <property type="project" value="UniProtKB"/>
</dbReference>
<dbReference type="GO" id="GO:0022900">
    <property type="term" value="P:electron transport chain"/>
    <property type="evidence" value="ECO:0000314"/>
    <property type="project" value="UniProtKB"/>
</dbReference>
<dbReference type="FunFam" id="3.40.50.360:FF:000094">
    <property type="entry name" value="Flavodoxin"/>
    <property type="match status" value="1"/>
</dbReference>
<dbReference type="Gene3D" id="3.40.50.360">
    <property type="match status" value="1"/>
</dbReference>
<dbReference type="InterPro" id="IPR050619">
    <property type="entry name" value="Flavodoxin"/>
</dbReference>
<dbReference type="InterPro" id="IPR008254">
    <property type="entry name" value="Flavodoxin/NO_synth"/>
</dbReference>
<dbReference type="InterPro" id="IPR001226">
    <property type="entry name" value="Flavodoxin_CS"/>
</dbReference>
<dbReference type="InterPro" id="IPR010086">
    <property type="entry name" value="Flavodoxin_lc"/>
</dbReference>
<dbReference type="InterPro" id="IPR029039">
    <property type="entry name" value="Flavoprotein-like_sf"/>
</dbReference>
<dbReference type="NCBIfam" id="TIGR01752">
    <property type="entry name" value="flav_long"/>
    <property type="match status" value="1"/>
</dbReference>
<dbReference type="NCBIfam" id="NF006736">
    <property type="entry name" value="PRK09267.1-2"/>
    <property type="match status" value="1"/>
</dbReference>
<dbReference type="NCBIfam" id="NF006738">
    <property type="entry name" value="PRK09267.1-4"/>
    <property type="match status" value="1"/>
</dbReference>
<dbReference type="NCBIfam" id="NF006739">
    <property type="entry name" value="PRK09267.1-5"/>
    <property type="match status" value="1"/>
</dbReference>
<dbReference type="PANTHER" id="PTHR42809:SF1">
    <property type="entry name" value="FLAVODOXIN 1"/>
    <property type="match status" value="1"/>
</dbReference>
<dbReference type="PANTHER" id="PTHR42809">
    <property type="entry name" value="FLAVODOXIN 2"/>
    <property type="match status" value="1"/>
</dbReference>
<dbReference type="Pfam" id="PF00258">
    <property type="entry name" value="Flavodoxin_1"/>
    <property type="match status" value="1"/>
</dbReference>
<dbReference type="PIRSF" id="PIRSF038996">
    <property type="entry name" value="FldA"/>
    <property type="match status" value="1"/>
</dbReference>
<dbReference type="SUPFAM" id="SSF52218">
    <property type="entry name" value="Flavoproteins"/>
    <property type="match status" value="1"/>
</dbReference>
<dbReference type="PROSITE" id="PS00201">
    <property type="entry name" value="FLAVODOXIN"/>
    <property type="match status" value="1"/>
</dbReference>
<dbReference type="PROSITE" id="PS50902">
    <property type="entry name" value="FLAVODOXIN_LIKE"/>
    <property type="match status" value="1"/>
</dbReference>
<sequence>MSKKIGLFYGTQTGKTESVAEIIRDEFGNDVVTLHDVSQAEVTDLNDYQYLIIGCPTWNIGELQSDWEGLYSELDDVDFNGKLVAYFGTGDQIGYADNFQDAIGILEEKISQRGGKTVGYWSTDGYDFNDSKALRNGKFVGLALDEDNQSDLTDDRIKSWVAQLKSEFGL</sequence>
<feature type="initiator methionine" description="Removed" evidence="2">
    <location>
        <position position="1"/>
    </location>
</feature>
<feature type="chain" id="PRO_0000171600" description="Flavodoxin">
    <location>
        <begin position="2"/>
        <end position="170"/>
    </location>
</feature>
<feature type="domain" description="Flavodoxin-like" evidence="1">
    <location>
        <begin position="5"/>
        <end position="165"/>
    </location>
</feature>
<feature type="strand" evidence="5">
    <location>
        <begin position="5"/>
        <end position="9"/>
    </location>
</feature>
<feature type="strand" evidence="5">
    <location>
        <begin position="12"/>
        <end position="14"/>
    </location>
</feature>
<feature type="helix" evidence="5">
    <location>
        <begin position="15"/>
        <end position="27"/>
    </location>
</feature>
<feature type="turn" evidence="5">
    <location>
        <begin position="29"/>
        <end position="31"/>
    </location>
</feature>
<feature type="strand" evidence="5">
    <location>
        <begin position="32"/>
        <end position="36"/>
    </location>
</feature>
<feature type="turn" evidence="5">
    <location>
        <begin position="37"/>
        <end position="39"/>
    </location>
</feature>
<feature type="helix" evidence="5">
    <location>
        <begin position="42"/>
        <end position="47"/>
    </location>
</feature>
<feature type="strand" evidence="5">
    <location>
        <begin position="49"/>
        <end position="54"/>
    </location>
</feature>
<feature type="turn" evidence="5">
    <location>
        <begin position="59"/>
        <end position="61"/>
    </location>
</feature>
<feature type="strand" evidence="4">
    <location>
        <begin position="62"/>
        <end position="64"/>
    </location>
</feature>
<feature type="helix" evidence="5">
    <location>
        <begin position="65"/>
        <end position="71"/>
    </location>
</feature>
<feature type="helix" evidence="5">
    <location>
        <begin position="72"/>
        <end position="76"/>
    </location>
</feature>
<feature type="strand" evidence="5">
    <location>
        <begin position="83"/>
        <end position="89"/>
    </location>
</feature>
<feature type="turn" evidence="5">
    <location>
        <begin position="92"/>
        <end position="97"/>
    </location>
</feature>
<feature type="helix" evidence="5">
    <location>
        <begin position="101"/>
        <end position="112"/>
    </location>
</feature>
<feature type="strand" evidence="4">
    <location>
        <begin position="114"/>
        <end position="118"/>
    </location>
</feature>
<feature type="strand" evidence="5">
    <location>
        <begin position="134"/>
        <end position="144"/>
    </location>
</feature>
<feature type="turn" evidence="5">
    <location>
        <begin position="146"/>
        <end position="148"/>
    </location>
</feature>
<feature type="helix" evidence="5">
    <location>
        <begin position="150"/>
        <end position="152"/>
    </location>
</feature>
<feature type="helix" evidence="5">
    <location>
        <begin position="153"/>
        <end position="167"/>
    </location>
</feature>
<proteinExistence type="evidence at protein level"/>
<name>FLAV_NOSSO</name>
<evidence type="ECO:0000255" key="1">
    <source>
        <dbReference type="PROSITE-ProRule" id="PRU00088"/>
    </source>
</evidence>
<evidence type="ECO:0000269" key="2">
    <source>
    </source>
</evidence>
<evidence type="ECO:0000305" key="3"/>
<evidence type="ECO:0007829" key="4">
    <source>
        <dbReference type="PDB" id="2KQU"/>
    </source>
</evidence>
<evidence type="ECO:0007829" key="5">
    <source>
        <dbReference type="PDB" id="5LJP"/>
    </source>
</evidence>
<reference key="1">
    <citation type="journal article" date="1991" name="Biochem. J.">
        <title>Isolation and overexpression in Escherichia coli of the flavodoxin gene from Anabaena PCC 7119.</title>
        <authorList>
            <person name="Fillat M.F."/>
            <person name="Borrias W.E."/>
            <person name="Weisbeek P.J."/>
        </authorList>
    </citation>
    <scope>NUCLEOTIDE SEQUENCE [GENOMIC DNA]</scope>
</reference>
<reference key="2">
    <citation type="journal article" date="1990" name="Biochim. Biophys. Acta">
        <title>Structural and chemical properties of a flavodoxin from Anabaena PCC 7119.</title>
        <authorList>
            <person name="Fillat M.F."/>
            <person name="Edmondson D.E."/>
            <person name="Gomez-Moreno C."/>
        </authorList>
    </citation>
    <scope>PROTEIN SEQUENCE OF 2-37</scope>
</reference>
<reference key="3">
    <citation type="journal article" date="1999" name="J. Mol. Biol.">
        <title>Energetics of a hydrogen bond (charged and neutral) and of a cation-pi interaction in apoflavodoxin.</title>
        <authorList>
            <person name="Fernandez-Recio J."/>
            <person name="Romero A."/>
            <person name="Sancho J."/>
        </authorList>
    </citation>
    <scope>X-RAY CRYSTALLOGRAPHY (2.0 ANGSTROMS)</scope>
</reference>
<comment type="function">
    <text>Low-potential electron donor to a number of redox enzymes.</text>
</comment>
<comment type="cofactor">
    <cofactor>
        <name>FMN</name>
        <dbReference type="ChEBI" id="CHEBI:58210"/>
    </cofactor>
</comment>
<comment type="interaction">
    <interactant intactId="EBI-593907">
        <id>P0A3E0</id>
    </interactant>
    <interactant intactId="EBI-593915">
        <id>P21890</id>
        <label>petH</label>
    </interactant>
    <organismsDiffer>false</organismsDiffer>
    <experiments>5</experiments>
</comment>
<comment type="interaction">
    <interactant intactId="EBI-593907">
        <id>P0A3E0</id>
    </interactant>
    <interactant intactId="EBI-593948">
        <id>P08165</id>
        <label>FDXR</label>
    </interactant>
    <organismsDiffer>true</organismsDiffer>
    <experiments>3</experiments>
</comment>
<comment type="similarity">
    <text evidence="3">Belongs to the flavodoxin family.</text>
</comment>
<protein>
    <recommendedName>
        <fullName>Flavodoxin</fullName>
    </recommendedName>
</protein>
<gene>
    <name type="primary">isiB</name>
</gene>